<protein>
    <recommendedName>
        <fullName evidence="1">UDP-N-acetylglucosamine 1-carboxyvinyltransferase</fullName>
        <ecNumber evidence="1">2.5.1.7</ecNumber>
    </recommendedName>
    <alternativeName>
        <fullName evidence="1">Enoylpyruvate transferase</fullName>
    </alternativeName>
    <alternativeName>
        <fullName evidence="1">UDP-N-acetylglucosamine enolpyruvyl transferase</fullName>
        <shortName evidence="1">EPT</shortName>
    </alternativeName>
</protein>
<evidence type="ECO:0000255" key="1">
    <source>
        <dbReference type="HAMAP-Rule" id="MF_00111"/>
    </source>
</evidence>
<reference key="1">
    <citation type="submission" date="2007-06" db="EMBL/GenBank/DDBJ databases">
        <authorList>
            <person name="Dodson R.J."/>
            <person name="Harkins D."/>
            <person name="Paulsen I.T."/>
        </authorList>
    </citation>
    <scope>NUCLEOTIDE SEQUENCE [LARGE SCALE GENOMIC DNA]</scope>
    <source>
        <strain>DSM 24068 / PA7</strain>
    </source>
</reference>
<dbReference type="EC" id="2.5.1.7" evidence="1"/>
<dbReference type="EMBL" id="CP000744">
    <property type="protein sequence ID" value="ABR86898.1"/>
    <property type="molecule type" value="Genomic_DNA"/>
</dbReference>
<dbReference type="RefSeq" id="WP_003155078.1">
    <property type="nucleotide sequence ID" value="NC_009656.1"/>
</dbReference>
<dbReference type="SMR" id="A6VBC3"/>
<dbReference type="KEGG" id="pap:PSPA7_5022"/>
<dbReference type="HOGENOM" id="CLU_027387_0_0_6"/>
<dbReference type="UniPathway" id="UPA00219"/>
<dbReference type="Proteomes" id="UP000001582">
    <property type="component" value="Chromosome"/>
</dbReference>
<dbReference type="GO" id="GO:0005737">
    <property type="term" value="C:cytoplasm"/>
    <property type="evidence" value="ECO:0007669"/>
    <property type="project" value="UniProtKB-SubCell"/>
</dbReference>
<dbReference type="GO" id="GO:0008760">
    <property type="term" value="F:UDP-N-acetylglucosamine 1-carboxyvinyltransferase activity"/>
    <property type="evidence" value="ECO:0007669"/>
    <property type="project" value="UniProtKB-UniRule"/>
</dbReference>
<dbReference type="GO" id="GO:0051301">
    <property type="term" value="P:cell division"/>
    <property type="evidence" value="ECO:0007669"/>
    <property type="project" value="UniProtKB-KW"/>
</dbReference>
<dbReference type="GO" id="GO:0071555">
    <property type="term" value="P:cell wall organization"/>
    <property type="evidence" value="ECO:0007669"/>
    <property type="project" value="UniProtKB-KW"/>
</dbReference>
<dbReference type="GO" id="GO:0009252">
    <property type="term" value="P:peptidoglycan biosynthetic process"/>
    <property type="evidence" value="ECO:0007669"/>
    <property type="project" value="UniProtKB-UniRule"/>
</dbReference>
<dbReference type="GO" id="GO:0008360">
    <property type="term" value="P:regulation of cell shape"/>
    <property type="evidence" value="ECO:0007669"/>
    <property type="project" value="UniProtKB-KW"/>
</dbReference>
<dbReference type="GO" id="GO:0019277">
    <property type="term" value="P:UDP-N-acetylgalactosamine biosynthetic process"/>
    <property type="evidence" value="ECO:0007669"/>
    <property type="project" value="InterPro"/>
</dbReference>
<dbReference type="CDD" id="cd01555">
    <property type="entry name" value="UdpNAET"/>
    <property type="match status" value="1"/>
</dbReference>
<dbReference type="FunFam" id="3.65.10.10:FF:000002">
    <property type="entry name" value="UDP-N-acetylglucosamine 1-carboxyvinyltransferase"/>
    <property type="match status" value="1"/>
</dbReference>
<dbReference type="Gene3D" id="3.65.10.10">
    <property type="entry name" value="Enolpyruvate transferase domain"/>
    <property type="match status" value="2"/>
</dbReference>
<dbReference type="HAMAP" id="MF_00111">
    <property type="entry name" value="MurA"/>
    <property type="match status" value="1"/>
</dbReference>
<dbReference type="InterPro" id="IPR001986">
    <property type="entry name" value="Enolpyruvate_Tfrase_dom"/>
</dbReference>
<dbReference type="InterPro" id="IPR036968">
    <property type="entry name" value="Enolpyruvate_Tfrase_sf"/>
</dbReference>
<dbReference type="InterPro" id="IPR050068">
    <property type="entry name" value="MurA_subfamily"/>
</dbReference>
<dbReference type="InterPro" id="IPR013792">
    <property type="entry name" value="RNA3'P_cycl/enolpyr_Trfase_a/b"/>
</dbReference>
<dbReference type="InterPro" id="IPR005750">
    <property type="entry name" value="UDP_GlcNAc_COvinyl_MurA"/>
</dbReference>
<dbReference type="NCBIfam" id="TIGR01072">
    <property type="entry name" value="murA"/>
    <property type="match status" value="1"/>
</dbReference>
<dbReference type="NCBIfam" id="NF006873">
    <property type="entry name" value="PRK09369.1"/>
    <property type="match status" value="1"/>
</dbReference>
<dbReference type="PANTHER" id="PTHR43783">
    <property type="entry name" value="UDP-N-ACETYLGLUCOSAMINE 1-CARBOXYVINYLTRANSFERASE"/>
    <property type="match status" value="1"/>
</dbReference>
<dbReference type="PANTHER" id="PTHR43783:SF1">
    <property type="entry name" value="UDP-N-ACETYLGLUCOSAMINE 1-CARBOXYVINYLTRANSFERASE"/>
    <property type="match status" value="1"/>
</dbReference>
<dbReference type="Pfam" id="PF00275">
    <property type="entry name" value="EPSP_synthase"/>
    <property type="match status" value="1"/>
</dbReference>
<dbReference type="SUPFAM" id="SSF55205">
    <property type="entry name" value="EPT/RTPC-like"/>
    <property type="match status" value="1"/>
</dbReference>
<accession>A6VBC3</accession>
<feature type="chain" id="PRO_1000023071" description="UDP-N-acetylglucosamine 1-carboxyvinyltransferase">
    <location>
        <begin position="1"/>
        <end position="421"/>
    </location>
</feature>
<feature type="active site" description="Proton donor" evidence="1">
    <location>
        <position position="117"/>
    </location>
</feature>
<feature type="binding site" evidence="1">
    <location>
        <begin position="22"/>
        <end position="23"/>
    </location>
    <ligand>
        <name>phosphoenolpyruvate</name>
        <dbReference type="ChEBI" id="CHEBI:58702"/>
    </ligand>
</feature>
<feature type="binding site" evidence="1">
    <location>
        <position position="93"/>
    </location>
    <ligand>
        <name>UDP-N-acetyl-alpha-D-glucosamine</name>
        <dbReference type="ChEBI" id="CHEBI:57705"/>
    </ligand>
</feature>
<feature type="binding site" evidence="1">
    <location>
        <begin position="122"/>
        <end position="126"/>
    </location>
    <ligand>
        <name>UDP-N-acetyl-alpha-D-glucosamine</name>
        <dbReference type="ChEBI" id="CHEBI:57705"/>
    </ligand>
</feature>
<feature type="binding site" evidence="1">
    <location>
        <position position="308"/>
    </location>
    <ligand>
        <name>UDP-N-acetyl-alpha-D-glucosamine</name>
        <dbReference type="ChEBI" id="CHEBI:57705"/>
    </ligand>
</feature>
<feature type="binding site" evidence="1">
    <location>
        <position position="330"/>
    </location>
    <ligand>
        <name>UDP-N-acetyl-alpha-D-glucosamine</name>
        <dbReference type="ChEBI" id="CHEBI:57705"/>
    </ligand>
</feature>
<feature type="modified residue" description="2-(S-cysteinyl)pyruvic acid O-phosphothioketal" evidence="1">
    <location>
        <position position="117"/>
    </location>
</feature>
<comment type="function">
    <text evidence="1">Cell wall formation. Adds enolpyruvyl to UDP-N-acetylglucosamine.</text>
</comment>
<comment type="catalytic activity">
    <reaction evidence="1">
        <text>phosphoenolpyruvate + UDP-N-acetyl-alpha-D-glucosamine = UDP-N-acetyl-3-O-(1-carboxyvinyl)-alpha-D-glucosamine + phosphate</text>
        <dbReference type="Rhea" id="RHEA:18681"/>
        <dbReference type="ChEBI" id="CHEBI:43474"/>
        <dbReference type="ChEBI" id="CHEBI:57705"/>
        <dbReference type="ChEBI" id="CHEBI:58702"/>
        <dbReference type="ChEBI" id="CHEBI:68483"/>
        <dbReference type="EC" id="2.5.1.7"/>
    </reaction>
</comment>
<comment type="pathway">
    <text evidence="1">Cell wall biogenesis; peptidoglycan biosynthesis.</text>
</comment>
<comment type="subcellular location">
    <subcellularLocation>
        <location evidence="1">Cytoplasm</location>
    </subcellularLocation>
</comment>
<comment type="similarity">
    <text evidence="1">Belongs to the EPSP synthase family. MurA subfamily.</text>
</comment>
<organism>
    <name type="scientific">Pseudomonas paraeruginosa (strain DSM 24068 / PA7)</name>
    <name type="common">Pseudomonas aeruginosa (strain PA7)</name>
    <dbReference type="NCBI Taxonomy" id="381754"/>
    <lineage>
        <taxon>Bacteria</taxon>
        <taxon>Pseudomonadati</taxon>
        <taxon>Pseudomonadota</taxon>
        <taxon>Gammaproteobacteria</taxon>
        <taxon>Pseudomonadales</taxon>
        <taxon>Pseudomonadaceae</taxon>
        <taxon>Pseudomonas</taxon>
        <taxon>Pseudomonas paraeruginosa</taxon>
    </lineage>
</organism>
<sequence>MDKLIITGGNRLDGEIRISGAKNSALPILAATLLADTPVTVCNLPHLHDITTMIELFGRMGVQPIIDEKLNVEVDASSIKTLVAPYELVKTMRASILVLGPMLARFGEAEVALPGGCAIGSRPVDLHIRGLEAMGAQIEVEGGYIKAKAPVGGLHGGQFFFDTVSVTGTENLMMAAALANGRTVLQNAAREPEVVDLANCLNAMGANVQGAGSDTIVIDGVKRLGGARYDVLPDRIETGTYLVAAAATGGRVKLKDTDPTILEAVLQKLEEAGAHINTGNNWIELDMKGNRPKAVNIRTAPYPAFPTDMQAQFISMNAVAEGTGAVIETVFENRFMHVYEMNRMGAQILVEGNTAIVTGVPRLKGAPVMATDLRASASLVIAGLVAEGDTLIDRIYHIDRGYECIEEKLQLLGAKIRRVPG</sequence>
<proteinExistence type="inferred from homology"/>
<keyword id="KW-0131">Cell cycle</keyword>
<keyword id="KW-0132">Cell division</keyword>
<keyword id="KW-0133">Cell shape</keyword>
<keyword id="KW-0961">Cell wall biogenesis/degradation</keyword>
<keyword id="KW-0963">Cytoplasm</keyword>
<keyword id="KW-0573">Peptidoglycan synthesis</keyword>
<keyword id="KW-0670">Pyruvate</keyword>
<keyword id="KW-0808">Transferase</keyword>
<name>MURA_PSEP7</name>
<gene>
    <name evidence="1" type="primary">murA</name>
    <name type="ordered locus">PSPA7_5022</name>
</gene>